<name>DLPA_DICDI</name>
<proteinExistence type="evidence at transcript level"/>
<gene>
    <name type="primary">dlpA</name>
    <name type="synonym">slb233</name>
    <name type="ORF">DDB_G0268592</name>
</gene>
<keyword id="KW-0025">Alternative splicing</keyword>
<keyword id="KW-0131">Cell cycle</keyword>
<keyword id="KW-0132">Cell division</keyword>
<keyword id="KW-0175">Coiled coil</keyword>
<keyword id="KW-0963">Cytoplasm</keyword>
<keyword id="KW-0342">GTP-binding</keyword>
<keyword id="KW-0378">Hydrolase</keyword>
<keyword id="KW-0505">Motor protein</keyword>
<keyword id="KW-0547">Nucleotide-binding</keyword>
<keyword id="KW-1185">Reference proteome</keyword>
<feature type="chain" id="PRO_0000371337" description="Dynamin-like protein A">
    <location>
        <begin position="1"/>
        <end position="880"/>
    </location>
</feature>
<feature type="domain" description="Dynamin-type G" evidence="2">
    <location>
        <begin position="191"/>
        <end position="478"/>
    </location>
</feature>
<feature type="region of interest" description="Disordered" evidence="3">
    <location>
        <begin position="1"/>
        <end position="124"/>
    </location>
</feature>
<feature type="region of interest" description="G1 motif" evidence="2">
    <location>
        <begin position="201"/>
        <end position="208"/>
    </location>
</feature>
<feature type="region of interest" description="G2 motif" evidence="2">
    <location>
        <begin position="227"/>
        <end position="240"/>
    </location>
</feature>
<feature type="region of interest" description="G3 motif" evidence="2">
    <location>
        <begin position="315"/>
        <end position="318"/>
    </location>
</feature>
<feature type="region of interest" description="G4 motif" evidence="2">
    <location>
        <begin position="380"/>
        <end position="383"/>
    </location>
</feature>
<feature type="region of interest" description="G5 motif" evidence="2">
    <location>
        <begin position="413"/>
        <end position="416"/>
    </location>
</feature>
<feature type="region of interest" description="Disordered" evidence="3">
    <location>
        <begin position="532"/>
        <end position="551"/>
    </location>
</feature>
<feature type="coiled-coil region" evidence="1">
    <location>
        <begin position="69"/>
        <end position="152"/>
    </location>
</feature>
<feature type="coiled-coil region" evidence="1">
    <location>
        <begin position="479"/>
        <end position="509"/>
    </location>
</feature>
<feature type="coiled-coil region" evidence="1">
    <location>
        <begin position="824"/>
        <end position="861"/>
    </location>
</feature>
<feature type="compositionally biased region" description="Basic and acidic residues" evidence="3">
    <location>
        <begin position="8"/>
        <end position="20"/>
    </location>
</feature>
<feature type="compositionally biased region" description="Polar residues" evidence="3">
    <location>
        <begin position="22"/>
        <end position="31"/>
    </location>
</feature>
<feature type="compositionally biased region" description="Low complexity" evidence="3">
    <location>
        <begin position="32"/>
        <end position="68"/>
    </location>
</feature>
<feature type="compositionally biased region" description="Basic and acidic residues" evidence="3">
    <location>
        <begin position="77"/>
        <end position="94"/>
    </location>
</feature>
<feature type="compositionally biased region" description="Basic and acidic residues" evidence="3">
    <location>
        <begin position="103"/>
        <end position="124"/>
    </location>
</feature>
<feature type="compositionally biased region" description="Polar residues" evidence="3">
    <location>
        <begin position="532"/>
        <end position="543"/>
    </location>
</feature>
<feature type="binding site" evidence="1">
    <location>
        <begin position="201"/>
        <end position="208"/>
    </location>
    <ligand>
        <name>GTP</name>
        <dbReference type="ChEBI" id="CHEBI:37565"/>
    </ligand>
</feature>
<feature type="binding site" evidence="1">
    <location>
        <begin position="315"/>
        <end position="319"/>
    </location>
    <ligand>
        <name>GTP</name>
        <dbReference type="ChEBI" id="CHEBI:37565"/>
    </ligand>
</feature>
<feature type="binding site" evidence="1">
    <location>
        <begin position="380"/>
        <end position="383"/>
    </location>
    <ligand>
        <name>GTP</name>
        <dbReference type="ChEBI" id="CHEBI:37565"/>
    </ligand>
</feature>
<feature type="splice variant" id="VSP_037019" description="In isoform 3." evidence="7">
    <original>MSVFKKKDKSDDKKKKHDE</original>
    <variation>MISCTNHHRTIYQNNLNNSINNSNNTVDNKKI</variation>
    <location>
        <begin position="1"/>
        <end position="19"/>
    </location>
</feature>
<feature type="splice variant" id="VSP_037020" description="In isoform 2." evidence="7">
    <original>E</original>
    <variation>EVDNKKI</variation>
    <location>
        <position position="19"/>
    </location>
</feature>
<comment type="function">
    <text evidence="6">Involved in cytokinesis. May hydrolyze GTP.</text>
</comment>
<comment type="catalytic activity">
    <reaction>
        <text>GTP + H2O = GDP + phosphate + H(+)</text>
        <dbReference type="Rhea" id="RHEA:19669"/>
        <dbReference type="ChEBI" id="CHEBI:15377"/>
        <dbReference type="ChEBI" id="CHEBI:15378"/>
        <dbReference type="ChEBI" id="CHEBI:37565"/>
        <dbReference type="ChEBI" id="CHEBI:43474"/>
        <dbReference type="ChEBI" id="CHEBI:58189"/>
        <dbReference type="EC" id="3.6.5.5"/>
    </reaction>
</comment>
<comment type="subcellular location">
    <subcellularLocation>
        <location evidence="7">Cytoplasm</location>
    </subcellularLocation>
    <subcellularLocation>
        <location evidence="6">Cleavage furrow</location>
    </subcellularLocation>
    <text>During cytokinesis, found in the cleavage furrow.</text>
</comment>
<comment type="alternative products">
    <event type="alternative splicing"/>
    <isoform>
        <id>Q55F94-1</id>
        <name>1</name>
        <sequence type="displayed"/>
    </isoform>
    <isoform>
        <id>Q55F94-2</id>
        <name>2</name>
        <sequence type="described" ref="VSP_037020"/>
    </isoform>
    <isoform>
        <id>Q55F94-3</id>
        <name>3</name>
        <sequence type="described" ref="VSP_037019"/>
    </isoform>
</comment>
<comment type="developmental stage">
    <text evidence="4 6">Expression begins during cell cycle progression, between 12 and 24 hours after germination. Reach a maximum around mid-log phase and disappear during the stationary phase. Expressed in the central funnel of cells of migrating slugs and at the top of rising culminants. Not expressed until the slug stage.</text>
</comment>
<comment type="induction">
    <text evidence="5">Induced by STATa.</text>
</comment>
<comment type="disruption phenotype">
    <text evidence="6">Produced cells are larger and a large amount of them contains more than 2 nuclei.</text>
</comment>
<comment type="similarity">
    <text evidence="2">Belongs to the TRAFAC class dynamin-like GTPase superfamily. Dynamin/Fzo/YdjA family.</text>
</comment>
<evidence type="ECO:0000255" key="1"/>
<evidence type="ECO:0000255" key="2">
    <source>
        <dbReference type="PROSITE-ProRule" id="PRU01055"/>
    </source>
</evidence>
<evidence type="ECO:0000256" key="3">
    <source>
        <dbReference type="SAM" id="MobiDB-lite"/>
    </source>
</evidence>
<evidence type="ECO:0000269" key="4">
    <source>
    </source>
</evidence>
<evidence type="ECO:0000269" key="5">
    <source>
    </source>
</evidence>
<evidence type="ECO:0000269" key="6">
    <source>
    </source>
</evidence>
<evidence type="ECO:0000305" key="7"/>
<protein>
    <recommendedName>
        <fullName>Dynamin-like protein A</fullName>
        <ecNumber>3.6.5.5</ecNumber>
    </recommendedName>
</protein>
<sequence length="880" mass="100009">MSVFKKKDKSDDKKKKHDEETPQGTFQPASQSTSNTNLNSLASSVNNGASVGSTNGSTPNNSNGSTPTYNHNNSAEELEKQKKEEDEKRKKSELEAAAAVVAKKKEDEEKQRKEQVELERKRRDEEIRRTNAAAANAANKELNEQVEISSLEQMGKLDPSSTIHDMFSFFPNEVYNSYEKLQYFSRDLNTAVSHPEIVFVGPRSSGKSSLIEAFIGRALNIVGGGNIVGVGGSNANGCSKRVLYLQFTNNIDFEVPKVTIKKDNTIKEFDHDIIVSIEQLNENLAKRNQLTNDYIEEPIYVSIESRTTLNLTLIDSPGLLFDQSQAESNKIESIVSSLLRPSHRLIIAVESCSQDWKSMSMGQYLKKIDPELSRSTFVFTKFHHTVRGFSSTRDINKYLSGTVPDIKGFFVTLPNHQVRASYSEANRFQEKIYQAHKRDMHALEQLQYDKRYERTIGVAPLRRYILNIVWKSYQDTIPRILKHLRSKRQTAEATLNELQKQSSSLDSTKLRSIASNYTVTFLQITEKLLSGTSEGNPSANGQTLDEEKSQQGDCGEWVDAYKEAIYIDPEEWNIPYWSSKLYGGQQLERLMAEFKAVCDNSKISEVKMDDIATASGINKLNNIPNYAWAASDLTSLISRDTFVPLIEQLCERAMYIMKRLTDIADKVIDSRRKSRCIGSSPFGGNGLNNINSGGNNGININDRLSNTDMDSLDQYPFFTHHVKNLYYDFVHRAAKGCKEKCMDEFYSSRTIYWELTEHPDSSLPSIRNDHHETKTAVCQLATKLFDSIRQRITKNVLLKLYNFFLVPMQTDLWNEIQAQITCLSNEQLEQLFEVQATREQLKQEEKKQQQILEKYSQIDEQFLKAASLFCRPLSNPTPSA</sequence>
<reference key="1">
    <citation type="journal article" date="2005" name="Nature">
        <title>The genome of the social amoeba Dictyostelium discoideum.</title>
        <authorList>
            <person name="Eichinger L."/>
            <person name="Pachebat J.A."/>
            <person name="Gloeckner G."/>
            <person name="Rajandream M.A."/>
            <person name="Sucgang R."/>
            <person name="Berriman M."/>
            <person name="Song J."/>
            <person name="Olsen R."/>
            <person name="Szafranski K."/>
            <person name="Xu Q."/>
            <person name="Tunggal B."/>
            <person name="Kummerfeld S."/>
            <person name="Madera M."/>
            <person name="Konfortov B.A."/>
            <person name="Rivero F."/>
            <person name="Bankier A.T."/>
            <person name="Lehmann R."/>
            <person name="Hamlin N."/>
            <person name="Davies R."/>
            <person name="Gaudet P."/>
            <person name="Fey P."/>
            <person name="Pilcher K."/>
            <person name="Chen G."/>
            <person name="Saunders D."/>
            <person name="Sodergren E.J."/>
            <person name="Davis P."/>
            <person name="Kerhornou A."/>
            <person name="Nie X."/>
            <person name="Hall N."/>
            <person name="Anjard C."/>
            <person name="Hemphill L."/>
            <person name="Bason N."/>
            <person name="Farbrother P."/>
            <person name="Desany B."/>
            <person name="Just E."/>
            <person name="Morio T."/>
            <person name="Rost R."/>
            <person name="Churcher C.M."/>
            <person name="Cooper J."/>
            <person name="Haydock S."/>
            <person name="van Driessche N."/>
            <person name="Cronin A."/>
            <person name="Goodhead I."/>
            <person name="Muzny D.M."/>
            <person name="Mourier T."/>
            <person name="Pain A."/>
            <person name="Lu M."/>
            <person name="Harper D."/>
            <person name="Lindsay R."/>
            <person name="Hauser H."/>
            <person name="James K.D."/>
            <person name="Quiles M."/>
            <person name="Madan Babu M."/>
            <person name="Saito T."/>
            <person name="Buchrieser C."/>
            <person name="Wardroper A."/>
            <person name="Felder M."/>
            <person name="Thangavelu M."/>
            <person name="Johnson D."/>
            <person name="Knights A."/>
            <person name="Loulseged H."/>
            <person name="Mungall K.L."/>
            <person name="Oliver K."/>
            <person name="Price C."/>
            <person name="Quail M.A."/>
            <person name="Urushihara H."/>
            <person name="Hernandez J."/>
            <person name="Rabbinowitsch E."/>
            <person name="Steffen D."/>
            <person name="Sanders M."/>
            <person name="Ma J."/>
            <person name="Kohara Y."/>
            <person name="Sharp S."/>
            <person name="Simmonds M.N."/>
            <person name="Spiegler S."/>
            <person name="Tivey A."/>
            <person name="Sugano S."/>
            <person name="White B."/>
            <person name="Walker D."/>
            <person name="Woodward J.R."/>
            <person name="Winckler T."/>
            <person name="Tanaka Y."/>
            <person name="Shaulsky G."/>
            <person name="Schleicher M."/>
            <person name="Weinstock G.M."/>
            <person name="Rosenthal A."/>
            <person name="Cox E.C."/>
            <person name="Chisholm R.L."/>
            <person name="Gibbs R.A."/>
            <person name="Loomis W.F."/>
            <person name="Platzer M."/>
            <person name="Kay R.R."/>
            <person name="Williams J.G."/>
            <person name="Dear P.H."/>
            <person name="Noegel A.A."/>
            <person name="Barrell B.G."/>
            <person name="Kuspa A."/>
        </authorList>
    </citation>
    <scope>NUCLEOTIDE SEQUENCE [LARGE SCALE GENOMIC DNA]</scope>
    <scope>ALTERNATIVE SPLICING</scope>
    <source>
        <strain>AX4</strain>
    </source>
</reference>
<reference key="2">
    <citation type="journal article" date="2003" name="Eukaryot. Cell">
        <title>Changing patterns of gene expression in Dictyostelium prestalk cell subtypes recognized by in situ hybridization with genes from microarray analyses.</title>
        <authorList>
            <person name="Maeda M."/>
            <person name="Sakamoto H."/>
            <person name="Iranfar N."/>
            <person name="Fuller D."/>
            <person name="Maruo T."/>
            <person name="Ogihara S."/>
            <person name="Morio T."/>
            <person name="Urushihara H."/>
            <person name="Tanaka Y."/>
            <person name="Loomis W.F."/>
        </authorList>
    </citation>
    <scope>DEVELOPMENTAL STAGE</scope>
</reference>
<reference key="3">
    <citation type="journal article" date="2004" name="Int. J. Dev. Biol.">
        <title>Identification of new modes of Dd-STATa regulation of gene expression in Dictyostelium by in situ hybridisation.</title>
        <authorList>
            <person name="Shimada N."/>
            <person name="Maeda M."/>
            <person name="Urushihara H."/>
            <person name="Kawata T."/>
        </authorList>
    </citation>
    <scope>INDUCTION</scope>
</reference>
<reference key="4">
    <citation type="journal article" date="2008" name="Proc. Natl. Acad. Sci. U.S.A.">
        <title>Evolutionary linkage between eukaryotic cytokinesis and chloroplast division by dynamin proteins.</title>
        <authorList>
            <person name="Miyagishima S.Y."/>
            <person name="Kuwayama H."/>
            <person name="Urushihara H."/>
            <person name="Nakanishi H."/>
        </authorList>
    </citation>
    <scope>FUNCTION</scope>
    <scope>DISRUPTION PHENOTYPE</scope>
    <scope>DEVELOPMENTAL STAGE</scope>
    <scope>SUBCELLULAR LOCATION</scope>
</reference>
<accession>Q55F94</accession>
<accession>B0G0Y6</accession>
<accession>C7FZW1</accession>
<organism>
    <name type="scientific">Dictyostelium discoideum</name>
    <name type="common">Social amoeba</name>
    <dbReference type="NCBI Taxonomy" id="44689"/>
    <lineage>
        <taxon>Eukaryota</taxon>
        <taxon>Amoebozoa</taxon>
        <taxon>Evosea</taxon>
        <taxon>Eumycetozoa</taxon>
        <taxon>Dictyostelia</taxon>
        <taxon>Dictyosteliales</taxon>
        <taxon>Dictyosteliaceae</taxon>
        <taxon>Dictyostelium</taxon>
    </lineage>
</organism>
<dbReference type="EC" id="3.6.5.5"/>
<dbReference type="EMBL" id="AAFI02000003">
    <property type="protein sequence ID" value="EAL73749.1"/>
    <property type="molecule type" value="Genomic_DNA"/>
</dbReference>
<dbReference type="EMBL" id="AAFI02000003">
    <property type="protein sequence ID" value="EDR41124.1"/>
    <property type="molecule type" value="Genomic_DNA"/>
</dbReference>
<dbReference type="EMBL" id="AAFI02000003">
    <property type="protein sequence ID" value="EEU04162.1"/>
    <property type="molecule type" value="Genomic_DNA"/>
</dbReference>
<dbReference type="RefSeq" id="XP_001732949.1">
    <property type="nucleotide sequence ID" value="XM_001732897.1"/>
</dbReference>
<dbReference type="RefSeq" id="XP_002649212.1">
    <property type="nucleotide sequence ID" value="XM_002649166.1"/>
</dbReference>
<dbReference type="RefSeq" id="XP_647639.1">
    <property type="nucleotide sequence ID" value="XM_642547.1"/>
</dbReference>
<dbReference type="SMR" id="Q55F94"/>
<dbReference type="FunCoup" id="Q55F94">
    <property type="interactions" value="1"/>
</dbReference>
<dbReference type="STRING" id="44689.Q55F94"/>
<dbReference type="GlyGen" id="Q55F94">
    <property type="glycosylation" value="1 site"/>
</dbReference>
<dbReference type="PaxDb" id="44689-DDB0233887"/>
<dbReference type="EnsemblProtists" id="EAL73749">
    <property type="protein sequence ID" value="EAL73749"/>
    <property type="gene ID" value="DDB_G0268592"/>
</dbReference>
<dbReference type="EnsemblProtists" id="EDR41124">
    <property type="protein sequence ID" value="EDR41124"/>
    <property type="gene ID" value="DDB_G0268592"/>
</dbReference>
<dbReference type="EnsemblProtists" id="EEU04162">
    <property type="protein sequence ID" value="EEU04162"/>
    <property type="gene ID" value="DDB_G0268592"/>
</dbReference>
<dbReference type="GeneID" id="8616454"/>
<dbReference type="KEGG" id="ddi:DDB_G0268592"/>
<dbReference type="dictyBase" id="DDB_G0268592">
    <property type="gene designation" value="dlpA"/>
</dbReference>
<dbReference type="VEuPathDB" id="AmoebaDB:DDB_G0268592"/>
<dbReference type="eggNOG" id="KOG0446">
    <property type="taxonomic scope" value="Eukaryota"/>
</dbReference>
<dbReference type="InParanoid" id="Q55F94"/>
<dbReference type="OMA" id="IAINMKY"/>
<dbReference type="PhylomeDB" id="Q55F94"/>
<dbReference type="BRENDA" id="3.6.5.5">
    <property type="organism ID" value="1939"/>
</dbReference>
<dbReference type="PRO" id="PR:Q55F94"/>
<dbReference type="Proteomes" id="UP000002195">
    <property type="component" value="Chromosome 1"/>
</dbReference>
<dbReference type="GO" id="GO:0032154">
    <property type="term" value="C:cleavage furrow"/>
    <property type="evidence" value="ECO:0000314"/>
    <property type="project" value="dictyBase"/>
</dbReference>
<dbReference type="GO" id="GO:0005737">
    <property type="term" value="C:cytoplasm"/>
    <property type="evidence" value="ECO:0000318"/>
    <property type="project" value="GO_Central"/>
</dbReference>
<dbReference type="GO" id="GO:0016020">
    <property type="term" value="C:membrane"/>
    <property type="evidence" value="ECO:0000318"/>
    <property type="project" value="GO_Central"/>
</dbReference>
<dbReference type="GO" id="GO:0005874">
    <property type="term" value="C:microtubule"/>
    <property type="evidence" value="ECO:0000318"/>
    <property type="project" value="GO_Central"/>
</dbReference>
<dbReference type="GO" id="GO:0030496">
    <property type="term" value="C:midbody"/>
    <property type="evidence" value="ECO:0000314"/>
    <property type="project" value="dictyBase"/>
</dbReference>
<dbReference type="GO" id="GO:0001891">
    <property type="term" value="C:phagocytic cup"/>
    <property type="evidence" value="ECO:0000314"/>
    <property type="project" value="dictyBase"/>
</dbReference>
<dbReference type="GO" id="GO:0005525">
    <property type="term" value="F:GTP binding"/>
    <property type="evidence" value="ECO:0007669"/>
    <property type="project" value="UniProtKB-KW"/>
</dbReference>
<dbReference type="GO" id="GO:0003924">
    <property type="term" value="F:GTPase activity"/>
    <property type="evidence" value="ECO:0000318"/>
    <property type="project" value="GO_Central"/>
</dbReference>
<dbReference type="GO" id="GO:0008017">
    <property type="term" value="F:microtubule binding"/>
    <property type="evidence" value="ECO:0000318"/>
    <property type="project" value="GO_Central"/>
</dbReference>
<dbReference type="GO" id="GO:0007015">
    <property type="term" value="P:actin filament organization"/>
    <property type="evidence" value="ECO:0000316"/>
    <property type="project" value="dictyBase"/>
</dbReference>
<dbReference type="GO" id="GO:0061952">
    <property type="term" value="P:midbody abscission"/>
    <property type="evidence" value="ECO:0000315"/>
    <property type="project" value="dictyBase"/>
</dbReference>
<dbReference type="GO" id="GO:0000281">
    <property type="term" value="P:mitotic cytokinesis"/>
    <property type="evidence" value="ECO:0000315"/>
    <property type="project" value="dictyBase"/>
</dbReference>
<dbReference type="GO" id="GO:0030835">
    <property type="term" value="P:negative regulation of actin filament depolymerization"/>
    <property type="evidence" value="ECO:0000315"/>
    <property type="project" value="dictyBase"/>
</dbReference>
<dbReference type="GO" id="GO:1905345">
    <property type="term" value="P:protein localization to cleavage furrow"/>
    <property type="evidence" value="ECO:0000315"/>
    <property type="project" value="dictyBase"/>
</dbReference>
<dbReference type="CDD" id="cd08771">
    <property type="entry name" value="DLP_1"/>
    <property type="match status" value="1"/>
</dbReference>
<dbReference type="Gene3D" id="3.40.50.300">
    <property type="entry name" value="P-loop containing nucleotide triphosphate hydrolases"/>
    <property type="match status" value="1"/>
</dbReference>
<dbReference type="InterPro" id="IPR022812">
    <property type="entry name" value="Dynamin"/>
</dbReference>
<dbReference type="InterPro" id="IPR001401">
    <property type="entry name" value="Dynamin_GTPase"/>
</dbReference>
<dbReference type="InterPro" id="IPR045063">
    <property type="entry name" value="Dynamin_N"/>
</dbReference>
<dbReference type="InterPro" id="IPR030381">
    <property type="entry name" value="G_DYNAMIN_dom"/>
</dbReference>
<dbReference type="InterPro" id="IPR027417">
    <property type="entry name" value="P-loop_NTPase"/>
</dbReference>
<dbReference type="PANTHER" id="PTHR11566">
    <property type="entry name" value="DYNAMIN"/>
    <property type="match status" value="1"/>
</dbReference>
<dbReference type="PANTHER" id="PTHR11566:SF40">
    <property type="entry name" value="DYNAMIN-LIKE PROTEIN A"/>
    <property type="match status" value="1"/>
</dbReference>
<dbReference type="Pfam" id="PF00350">
    <property type="entry name" value="Dynamin_N"/>
    <property type="match status" value="1"/>
</dbReference>
<dbReference type="PRINTS" id="PR00195">
    <property type="entry name" value="DYNAMIN"/>
</dbReference>
<dbReference type="SMART" id="SM00053">
    <property type="entry name" value="DYNc"/>
    <property type="match status" value="1"/>
</dbReference>
<dbReference type="SUPFAM" id="SSF52540">
    <property type="entry name" value="P-loop containing nucleoside triphosphate hydrolases"/>
    <property type="match status" value="1"/>
</dbReference>
<dbReference type="PROSITE" id="PS51718">
    <property type="entry name" value="G_DYNAMIN_2"/>
    <property type="match status" value="1"/>
</dbReference>